<keyword id="KW-0119">Carbohydrate metabolism</keyword>
<keyword id="KW-0963">Cytoplasm</keyword>
<keyword id="KW-0378">Hydrolase</keyword>
<keyword id="KW-0460">Magnesium</keyword>
<keyword id="KW-0479">Metal-binding</keyword>
<comment type="catalytic activity">
    <reaction evidence="1">
        <text>beta-D-fructose 1,6-bisphosphate + H2O = beta-D-fructose 6-phosphate + phosphate</text>
        <dbReference type="Rhea" id="RHEA:11064"/>
        <dbReference type="ChEBI" id="CHEBI:15377"/>
        <dbReference type="ChEBI" id="CHEBI:32966"/>
        <dbReference type="ChEBI" id="CHEBI:43474"/>
        <dbReference type="ChEBI" id="CHEBI:57634"/>
        <dbReference type="EC" id="3.1.3.11"/>
    </reaction>
</comment>
<comment type="cofactor">
    <cofactor evidence="1">
        <name>Mg(2+)</name>
        <dbReference type="ChEBI" id="CHEBI:18420"/>
    </cofactor>
    <text evidence="1">Binds 2 magnesium ions per subunit.</text>
</comment>
<comment type="pathway">
    <text evidence="1">Carbohydrate biosynthesis; gluconeogenesis.</text>
</comment>
<comment type="subunit">
    <text evidence="1">Homotetramer.</text>
</comment>
<comment type="subcellular location">
    <subcellularLocation>
        <location evidence="1">Cytoplasm</location>
    </subcellularLocation>
</comment>
<comment type="similarity">
    <text evidence="1">Belongs to the FBPase class 1 family.</text>
</comment>
<evidence type="ECO:0000255" key="1">
    <source>
        <dbReference type="HAMAP-Rule" id="MF_01855"/>
    </source>
</evidence>
<protein>
    <recommendedName>
        <fullName evidence="1">Fructose-1,6-bisphosphatase class 1 2</fullName>
        <shortName evidence="1">FBPase class 1 2</shortName>
        <ecNumber evidence="1">3.1.3.11</ecNumber>
    </recommendedName>
    <alternativeName>
        <fullName evidence="1">D-fructose-1,6-bisphosphate 1-phosphohydrolase class 1 2</fullName>
    </alternativeName>
</protein>
<feature type="chain" id="PRO_0000364531" description="Fructose-1,6-bisphosphatase class 1 2">
    <location>
        <begin position="1"/>
        <end position="364"/>
    </location>
</feature>
<feature type="binding site" evidence="1">
    <location>
        <position position="101"/>
    </location>
    <ligand>
        <name>Mg(2+)</name>
        <dbReference type="ChEBI" id="CHEBI:18420"/>
        <label>1</label>
    </ligand>
</feature>
<feature type="binding site" evidence="1">
    <location>
        <position position="123"/>
    </location>
    <ligand>
        <name>Mg(2+)</name>
        <dbReference type="ChEBI" id="CHEBI:18420"/>
        <label>1</label>
    </ligand>
</feature>
<feature type="binding site" evidence="1">
    <location>
        <position position="123"/>
    </location>
    <ligand>
        <name>Mg(2+)</name>
        <dbReference type="ChEBI" id="CHEBI:18420"/>
        <label>2</label>
    </ligand>
</feature>
<feature type="binding site" evidence="1">
    <location>
        <position position="125"/>
    </location>
    <ligand>
        <name>Mg(2+)</name>
        <dbReference type="ChEBI" id="CHEBI:18420"/>
        <label>1</label>
    </ligand>
</feature>
<feature type="binding site" evidence="1">
    <location>
        <begin position="126"/>
        <end position="129"/>
    </location>
    <ligand>
        <name>substrate</name>
    </ligand>
</feature>
<feature type="binding site" evidence="1">
    <location>
        <position position="126"/>
    </location>
    <ligand>
        <name>Mg(2+)</name>
        <dbReference type="ChEBI" id="CHEBI:18420"/>
        <label>2</label>
    </ligand>
</feature>
<feature type="binding site" evidence="1">
    <location>
        <position position="218"/>
    </location>
    <ligand>
        <name>substrate</name>
    </ligand>
</feature>
<feature type="binding site" evidence="1">
    <location>
        <position position="290"/>
    </location>
    <ligand>
        <name>Mg(2+)</name>
        <dbReference type="ChEBI" id="CHEBI:18420"/>
        <label>2</label>
    </ligand>
</feature>
<accession>B3RBL3</accession>
<dbReference type="EC" id="3.1.3.11" evidence="1"/>
<dbReference type="EMBL" id="CU633750">
    <property type="protein sequence ID" value="CAQ72288.1"/>
    <property type="molecule type" value="Genomic_DNA"/>
</dbReference>
<dbReference type="RefSeq" id="WP_012356503.1">
    <property type="nucleotide sequence ID" value="NC_010530.1"/>
</dbReference>
<dbReference type="SMR" id="B3RBL3"/>
<dbReference type="GeneID" id="29765404"/>
<dbReference type="KEGG" id="cti:RALTA_B1696"/>
<dbReference type="eggNOG" id="COG0158">
    <property type="taxonomic scope" value="Bacteria"/>
</dbReference>
<dbReference type="HOGENOM" id="CLU_039977_0_0_4"/>
<dbReference type="BioCyc" id="CTAI977880:RALTA_RS23790-MONOMER"/>
<dbReference type="UniPathway" id="UPA00138"/>
<dbReference type="Proteomes" id="UP000001692">
    <property type="component" value="Chromosome 2"/>
</dbReference>
<dbReference type="GO" id="GO:0005829">
    <property type="term" value="C:cytosol"/>
    <property type="evidence" value="ECO:0007669"/>
    <property type="project" value="TreeGrafter"/>
</dbReference>
<dbReference type="GO" id="GO:0042132">
    <property type="term" value="F:fructose 1,6-bisphosphate 1-phosphatase activity"/>
    <property type="evidence" value="ECO:0007669"/>
    <property type="project" value="UniProtKB-UniRule"/>
</dbReference>
<dbReference type="GO" id="GO:0000287">
    <property type="term" value="F:magnesium ion binding"/>
    <property type="evidence" value="ECO:0007669"/>
    <property type="project" value="UniProtKB-UniRule"/>
</dbReference>
<dbReference type="GO" id="GO:0030388">
    <property type="term" value="P:fructose 1,6-bisphosphate metabolic process"/>
    <property type="evidence" value="ECO:0007669"/>
    <property type="project" value="TreeGrafter"/>
</dbReference>
<dbReference type="GO" id="GO:0006002">
    <property type="term" value="P:fructose 6-phosphate metabolic process"/>
    <property type="evidence" value="ECO:0007669"/>
    <property type="project" value="TreeGrafter"/>
</dbReference>
<dbReference type="GO" id="GO:0006000">
    <property type="term" value="P:fructose metabolic process"/>
    <property type="evidence" value="ECO:0007669"/>
    <property type="project" value="TreeGrafter"/>
</dbReference>
<dbReference type="GO" id="GO:0006094">
    <property type="term" value="P:gluconeogenesis"/>
    <property type="evidence" value="ECO:0007669"/>
    <property type="project" value="UniProtKB-UniRule"/>
</dbReference>
<dbReference type="GO" id="GO:0005986">
    <property type="term" value="P:sucrose biosynthetic process"/>
    <property type="evidence" value="ECO:0007669"/>
    <property type="project" value="TreeGrafter"/>
</dbReference>
<dbReference type="CDD" id="cd00354">
    <property type="entry name" value="FBPase"/>
    <property type="match status" value="1"/>
</dbReference>
<dbReference type="FunFam" id="3.30.540.10:FF:000002">
    <property type="entry name" value="Fructose-1,6-bisphosphatase class 1"/>
    <property type="match status" value="1"/>
</dbReference>
<dbReference type="FunFam" id="3.40.190.80:FF:000011">
    <property type="entry name" value="Fructose-1,6-bisphosphatase class 1"/>
    <property type="match status" value="1"/>
</dbReference>
<dbReference type="Gene3D" id="3.40.190.80">
    <property type="match status" value="1"/>
</dbReference>
<dbReference type="Gene3D" id="3.30.540.10">
    <property type="entry name" value="Fructose-1,6-Bisphosphatase, subunit A, domain 1"/>
    <property type="match status" value="1"/>
</dbReference>
<dbReference type="HAMAP" id="MF_01855">
    <property type="entry name" value="FBPase_class1"/>
    <property type="match status" value="1"/>
</dbReference>
<dbReference type="InterPro" id="IPR044015">
    <property type="entry name" value="FBPase_C_dom"/>
</dbReference>
<dbReference type="InterPro" id="IPR000146">
    <property type="entry name" value="FBPase_class-1"/>
</dbReference>
<dbReference type="InterPro" id="IPR033391">
    <property type="entry name" value="FBPase_N"/>
</dbReference>
<dbReference type="InterPro" id="IPR028343">
    <property type="entry name" value="FBPtase"/>
</dbReference>
<dbReference type="InterPro" id="IPR020548">
    <property type="entry name" value="Fructose_bisphosphatase_AS"/>
</dbReference>
<dbReference type="NCBIfam" id="NF006779">
    <property type="entry name" value="PRK09293.1-3"/>
    <property type="match status" value="1"/>
</dbReference>
<dbReference type="NCBIfam" id="NF006780">
    <property type="entry name" value="PRK09293.1-4"/>
    <property type="match status" value="1"/>
</dbReference>
<dbReference type="PANTHER" id="PTHR11556">
    <property type="entry name" value="FRUCTOSE-1,6-BISPHOSPHATASE-RELATED"/>
    <property type="match status" value="1"/>
</dbReference>
<dbReference type="PANTHER" id="PTHR11556:SF35">
    <property type="entry name" value="SEDOHEPTULOSE-1,7-BISPHOSPHATASE, CHLOROPLASTIC"/>
    <property type="match status" value="1"/>
</dbReference>
<dbReference type="Pfam" id="PF00316">
    <property type="entry name" value="FBPase"/>
    <property type="match status" value="1"/>
</dbReference>
<dbReference type="Pfam" id="PF18913">
    <property type="entry name" value="FBPase_C"/>
    <property type="match status" value="1"/>
</dbReference>
<dbReference type="PIRSF" id="PIRSF500210">
    <property type="entry name" value="FBPtase"/>
    <property type="match status" value="1"/>
</dbReference>
<dbReference type="PIRSF" id="PIRSF000904">
    <property type="entry name" value="FBPtase_SBPase"/>
    <property type="match status" value="1"/>
</dbReference>
<dbReference type="PRINTS" id="PR00115">
    <property type="entry name" value="F16BPHPHTASE"/>
</dbReference>
<dbReference type="SUPFAM" id="SSF56655">
    <property type="entry name" value="Carbohydrate phosphatase"/>
    <property type="match status" value="1"/>
</dbReference>
<dbReference type="PROSITE" id="PS00124">
    <property type="entry name" value="FBPASE"/>
    <property type="match status" value="1"/>
</dbReference>
<gene>
    <name evidence="1" type="primary">fbp2</name>
    <name type="ordered locus">RALTA_B1696</name>
</gene>
<sequence length="364" mass="39828">MPEVQRMTLTQFLIEQRRRYPDASGGFNGLILNVAMACKEIARAVAFGALGGLHGRAGGPDAAGAAINVQGEVQQKLDVLSNDTFLRVNEWGGYLAGMASEEMEAPYQIPAHYPRGKYLLVFDPLDGSSNIDVNVSVGSIFSVLRAPEGTADVTEQAFLQPGTAQVAAGYALYGPTTMLVLTVGNGVNGFTLDPNLGEFFLTHPDLRVPADTREFAINASNSRFWEAPIRQYVSECLAGQTGPRGKDFNMRWIASMVAEAHRILMRGGVFMYPRDTKDPARPGRLRLLYEANPIAFLMEQAGGRASTGRQALMSVAPNALHQRIGVIFGSRHEVERIERYHNEQTDPDLPNPLFNERSLFRASA</sequence>
<name>F16A2_CUPTR</name>
<organism>
    <name type="scientific">Cupriavidus taiwanensis (strain DSM 17343 / BCRC 17206 / CCUG 44338 / CIP 107171 / LMG 19424 / R1)</name>
    <name type="common">Ralstonia taiwanensis (strain LMG 19424)</name>
    <dbReference type="NCBI Taxonomy" id="977880"/>
    <lineage>
        <taxon>Bacteria</taxon>
        <taxon>Pseudomonadati</taxon>
        <taxon>Pseudomonadota</taxon>
        <taxon>Betaproteobacteria</taxon>
        <taxon>Burkholderiales</taxon>
        <taxon>Burkholderiaceae</taxon>
        <taxon>Cupriavidus</taxon>
    </lineage>
</organism>
<reference key="1">
    <citation type="journal article" date="2008" name="Genome Res.">
        <title>Genome sequence of the beta-rhizobium Cupriavidus taiwanensis and comparative genomics of rhizobia.</title>
        <authorList>
            <person name="Amadou C."/>
            <person name="Pascal G."/>
            <person name="Mangenot S."/>
            <person name="Glew M."/>
            <person name="Bontemps C."/>
            <person name="Capela D."/>
            <person name="Carrere S."/>
            <person name="Cruveiller S."/>
            <person name="Dossat C."/>
            <person name="Lajus A."/>
            <person name="Marchetti M."/>
            <person name="Poinsot V."/>
            <person name="Rouy Z."/>
            <person name="Servin B."/>
            <person name="Saad M."/>
            <person name="Schenowitz C."/>
            <person name="Barbe V."/>
            <person name="Batut J."/>
            <person name="Medigue C."/>
            <person name="Masson-Boivin C."/>
        </authorList>
    </citation>
    <scope>NUCLEOTIDE SEQUENCE [LARGE SCALE GENOMIC DNA]</scope>
    <source>
        <strain>DSM 17343 / BCRC 17206 / CCUG 44338 / CIP 107171 / LMG 19424 / R1</strain>
    </source>
</reference>
<proteinExistence type="inferred from homology"/>